<feature type="chain" id="PRO_0000222554" description="RNA replication protein">
    <location>
        <begin position="1"/>
        <end position="1456"/>
    </location>
</feature>
<feature type="domain" description="Alphavirus-like MT" evidence="3">
    <location>
        <begin position="59"/>
        <end position="224"/>
    </location>
</feature>
<feature type="domain" description="(+)RNA virus helicase ATP-binding">
    <location>
        <begin position="695"/>
        <end position="862"/>
    </location>
</feature>
<feature type="domain" description="(+)RNA virus helicase C-terminal">
    <location>
        <begin position="863"/>
        <end position="997"/>
    </location>
</feature>
<feature type="domain" description="RdRp catalytic" evidence="2">
    <location>
        <begin position="1236"/>
        <end position="1343"/>
    </location>
</feature>
<feature type="region of interest" description="Disordered" evidence="4">
    <location>
        <begin position="474"/>
        <end position="499"/>
    </location>
</feature>
<feature type="region of interest" description="Disordered" evidence="4">
    <location>
        <begin position="513"/>
        <end position="563"/>
    </location>
</feature>
<feature type="region of interest" description="Disordered" evidence="4">
    <location>
        <begin position="581"/>
        <end position="600"/>
    </location>
</feature>
<feature type="compositionally biased region" description="Polar residues" evidence="4">
    <location>
        <begin position="480"/>
        <end position="489"/>
    </location>
</feature>
<feature type="compositionally biased region" description="Basic residues" evidence="4">
    <location>
        <begin position="513"/>
        <end position="528"/>
    </location>
</feature>
<feature type="compositionally biased region" description="Basic and acidic residues" evidence="4">
    <location>
        <begin position="529"/>
        <end position="547"/>
    </location>
</feature>
<feature type="compositionally biased region" description="Polar residues" evidence="4">
    <location>
        <begin position="586"/>
        <end position="595"/>
    </location>
</feature>
<feature type="binding site" evidence="1">
    <location>
        <begin position="735"/>
        <end position="742"/>
    </location>
    <ligand>
        <name>ATP</name>
        <dbReference type="ChEBI" id="CHEBI:30616"/>
    </ligand>
</feature>
<protein>
    <recommendedName>
        <fullName>RNA replication protein</fullName>
    </recommendedName>
    <alternativeName>
        <fullName>165 kDa protein</fullName>
    </alternativeName>
    <alternativeName>
        <fullName>ORF1 protein</fullName>
    </alternativeName>
    <domain>
        <recommendedName>
            <fullName>RNA-directed RNA polymerase</fullName>
            <ecNumber>2.7.7.48</ecNumber>
        </recommendedName>
    </domain>
    <domain>
        <recommendedName>
            <fullName>Helicase</fullName>
            <ecNumber>3.6.4.13</ecNumber>
        </recommendedName>
    </domain>
</protein>
<proteinExistence type="inferred from homology"/>
<dbReference type="EC" id="2.7.7.48"/>
<dbReference type="EC" id="3.6.4.13"/>
<dbReference type="EMBL" id="M31541">
    <property type="protein sequence ID" value="AAA47178.1"/>
    <property type="molecule type" value="Genomic_RNA"/>
</dbReference>
<dbReference type="EMBL" id="X55802">
    <property type="protein sequence ID" value="CAA39324.1"/>
    <property type="molecule type" value="Genomic_RNA"/>
</dbReference>
<dbReference type="PIR" id="S14005">
    <property type="entry name" value="S14005"/>
</dbReference>
<dbReference type="Proteomes" id="UP000008615">
    <property type="component" value="Genome"/>
</dbReference>
<dbReference type="GO" id="GO:0005524">
    <property type="term" value="F:ATP binding"/>
    <property type="evidence" value="ECO:0007669"/>
    <property type="project" value="UniProtKB-KW"/>
</dbReference>
<dbReference type="GO" id="GO:0016887">
    <property type="term" value="F:ATP hydrolysis activity"/>
    <property type="evidence" value="ECO:0007669"/>
    <property type="project" value="RHEA"/>
</dbReference>
<dbReference type="GO" id="GO:0008174">
    <property type="term" value="F:mRNA methyltransferase activity"/>
    <property type="evidence" value="ECO:0007669"/>
    <property type="project" value="InterPro"/>
</dbReference>
<dbReference type="GO" id="GO:0003723">
    <property type="term" value="F:RNA binding"/>
    <property type="evidence" value="ECO:0007669"/>
    <property type="project" value="InterPro"/>
</dbReference>
<dbReference type="GO" id="GO:0003724">
    <property type="term" value="F:RNA helicase activity"/>
    <property type="evidence" value="ECO:0007669"/>
    <property type="project" value="UniProtKB-EC"/>
</dbReference>
<dbReference type="GO" id="GO:0003968">
    <property type="term" value="F:RNA-directed RNA polymerase activity"/>
    <property type="evidence" value="ECO:0007669"/>
    <property type="project" value="UniProtKB-KW"/>
</dbReference>
<dbReference type="GO" id="GO:0006351">
    <property type="term" value="P:DNA-templated transcription"/>
    <property type="evidence" value="ECO:0007669"/>
    <property type="project" value="InterPro"/>
</dbReference>
<dbReference type="GO" id="GO:0016556">
    <property type="term" value="P:mRNA modification"/>
    <property type="evidence" value="ECO:0007669"/>
    <property type="project" value="InterPro"/>
</dbReference>
<dbReference type="GO" id="GO:0006396">
    <property type="term" value="P:RNA processing"/>
    <property type="evidence" value="ECO:0007669"/>
    <property type="project" value="InterPro"/>
</dbReference>
<dbReference type="GO" id="GO:0039694">
    <property type="term" value="P:viral RNA genome replication"/>
    <property type="evidence" value="ECO:0007669"/>
    <property type="project" value="InterPro"/>
</dbReference>
<dbReference type="CDD" id="cd23246">
    <property type="entry name" value="Alphaflexiviridae_RdRp"/>
    <property type="match status" value="1"/>
</dbReference>
<dbReference type="FunFam" id="3.40.50.300:FF:001668">
    <property type="entry name" value="Non-structural polyprotein pORF1"/>
    <property type="match status" value="1"/>
</dbReference>
<dbReference type="Gene3D" id="3.40.50.300">
    <property type="entry name" value="P-loop containing nucleotide triphosphate hydrolases"/>
    <property type="match status" value="1"/>
</dbReference>
<dbReference type="InterPro" id="IPR027351">
    <property type="entry name" value="(+)RNA_virus_helicase_core_dom"/>
</dbReference>
<dbReference type="InterPro" id="IPR002588">
    <property type="entry name" value="Alphavirus-like_MT_dom"/>
</dbReference>
<dbReference type="InterPro" id="IPR043502">
    <property type="entry name" value="DNA/RNA_pol_sf"/>
</dbReference>
<dbReference type="InterPro" id="IPR027417">
    <property type="entry name" value="P-loop_NTPase"/>
</dbReference>
<dbReference type="InterPro" id="IPR001788">
    <property type="entry name" value="RNA-dep_RNA_pol_alsuvir"/>
</dbReference>
<dbReference type="InterPro" id="IPR007094">
    <property type="entry name" value="RNA-dir_pol_PSvirus"/>
</dbReference>
<dbReference type="Pfam" id="PF00978">
    <property type="entry name" value="RdRP_2"/>
    <property type="match status" value="1"/>
</dbReference>
<dbReference type="Pfam" id="PF01443">
    <property type="entry name" value="Viral_helicase1"/>
    <property type="match status" value="1"/>
</dbReference>
<dbReference type="Pfam" id="PF01660">
    <property type="entry name" value="Vmethyltransf"/>
    <property type="match status" value="1"/>
</dbReference>
<dbReference type="SUPFAM" id="SSF56672">
    <property type="entry name" value="DNA/RNA polymerases"/>
    <property type="match status" value="1"/>
</dbReference>
<dbReference type="SUPFAM" id="SSF52540">
    <property type="entry name" value="P-loop containing nucleoside triphosphate hydrolases"/>
    <property type="match status" value="2"/>
</dbReference>
<dbReference type="PROSITE" id="PS51743">
    <property type="entry name" value="ALPHAVIRUS_MT"/>
    <property type="match status" value="1"/>
</dbReference>
<dbReference type="PROSITE" id="PS51657">
    <property type="entry name" value="PSRV_HELICASE"/>
    <property type="match status" value="1"/>
</dbReference>
<dbReference type="PROSITE" id="PS50507">
    <property type="entry name" value="RDRP_SSRNA_POS"/>
    <property type="match status" value="1"/>
</dbReference>
<keyword id="KW-0067">ATP-binding</keyword>
<keyword id="KW-0347">Helicase</keyword>
<keyword id="KW-0378">Hydrolase</keyword>
<keyword id="KW-0511">Multifunctional enzyme</keyword>
<keyword id="KW-0547">Nucleotide-binding</keyword>
<keyword id="KW-0548">Nucleotidyltransferase</keyword>
<keyword id="KW-0696">RNA-directed RNA polymerase</keyword>
<keyword id="KW-0808">Transferase</keyword>
<keyword id="KW-0693">Viral RNA replication</keyword>
<organismHost>
    <name type="scientific">Brassica campestris</name>
    <name type="common">Field mustard</name>
    <dbReference type="NCBI Taxonomy" id="3711"/>
</organismHost>
<organismHost>
    <name type="scientific">Solanum tuberosum</name>
    <name type="common">Potato</name>
    <dbReference type="NCBI Taxonomy" id="4113"/>
</organismHost>
<sequence length="1456" mass="165301">MAKVREVYQSFTDSTTKTLIQDEAYRNIRPIMEKHKLSNPYAQTIEAANDLEGFGIATNPYSIELHTHAAAKTIENKLLEVLGSLLPQEPVTFMFLKPRKLNFMRRNPRIKDIFHNVAIEPRDVARYPKETIIHKLAEIETDTAYISDTLHFLDPSYIVETFQNCPKLQTLYATLVLPSEAAFKMESTHPNIYSLKYFGDGFQYIPGNHGGGAYHHEFTDLQWLKVGKIKWRDPKDGLLGHLNYTHEQVDTHTVTVQLQESFAANHLYCIRRGNMMTPEVRTFGQPDRYVLPPQIFLPKVHNCKKPILKKTMMQLFLYVRTVKVAKNCDIFAKVRQLIKSSDRDKFSAVELVYLVSYMEFLAALQATTCFSDTLSGGLLTKTLAPVRAWIQEKKMQLCGLEDYVKLVKAVDWRPVDFSFKVETWDFRFTQLGMWKAFQPSELSDVEEMNNFFDDGDLLDCFTRMPAYAVNAEEDLAGMRGNNQEETSTAPREPEGEKKEYINPAETFLDKLTRKHNRETRSRAAKKAKRLAEIQDSMNRDRTEEGSHKTPNMGEAPSNADLPGVNEVEAGTTFPTLKALPQKWEDASSTDSSTIDPTEIIPGEEDDKAATQKVVVGLPWKHWLPQLNAVGFKALEIQRDRNGTMIMPITEMVFGLDKEEFPEGTPEALARELKAMNRSPTTIPLDLLRARDYGSDVKNKRIGAITKTQAASWGEYLTGKIESLPERKVAACVIHGAGGSGKSHAIQKALREIGKGSDITVVLPTNELRLDWSKKVPNTEPYMFKTYEKALIGGTGSIVIFDDYSKLPPGYIEALVSFSTKIKLIILTGDSRQSVYHETSDDASIRHLGPATEVFAKYCRYYLNATHRNKKDLANMLGVYSERTGTTEISMSSEFLEGVPTLVPSDEKRRLYMGTGRNDTFTYAGCQGLTKPKVQIVLDHNTQVCSANVMYSALSRATDRIHFINTSANSSAFWEKLDSTPYLKTFLSVVREHALKEYEPAEAEPIKEPEPQTHMCVENEESVLEEYKEELLEKFDREIHSDAHGHSNCVQTEDTTIQLFSHQEAKDETLLWATIDARLKTSNQESNFREFLSKRDIGDVLFLNYQKAMGLPKEPIPFSQEVWEACAHEVQSKYLSKSKCNLINGTVRQSPDFDENKIMVFLKSQWVTKVEKLGLPKIKPGQTIAAFYQQTVMLFGTMARYMRWFRQAFQPKEVFINCETTPEDMSAWALSNWNFTRPSLANDYTAFDQSQDGAMLQFEVLKAKHHCIPEEIIQAYIDIKTNAQIFLGTLSIMRLTGEGPTFDANTECNIAFTHTKFDIPAGTAQVYAGDDSALDCVPEVKQSFHRLEDKLLLKSKPVITQQKKGSWPEFCGWLITPKGVMKDPIKLHVSLKLAEAKGELRKCQDSYEIDLSYAYDHKDSLHDLFDEKQCQAHTLTCRTLIKSGRGTVSLPRLKNFL</sequence>
<accession>P22591</accession>
<evidence type="ECO:0000255" key="1"/>
<evidence type="ECO:0000255" key="2">
    <source>
        <dbReference type="PROSITE-ProRule" id="PRU00539"/>
    </source>
</evidence>
<evidence type="ECO:0000255" key="3">
    <source>
        <dbReference type="PROSITE-ProRule" id="PRU01079"/>
    </source>
</evidence>
<evidence type="ECO:0000256" key="4">
    <source>
        <dbReference type="SAM" id="MobiDB-lite"/>
    </source>
</evidence>
<evidence type="ECO:0000305" key="5"/>
<comment type="function">
    <text evidence="5">RNA replication. The central part of this protein possibly functions as an ATP-binding helicase (Probable).</text>
</comment>
<comment type="catalytic activity">
    <reaction evidence="2">
        <text>RNA(n) + a ribonucleoside 5'-triphosphate = RNA(n+1) + diphosphate</text>
        <dbReference type="Rhea" id="RHEA:21248"/>
        <dbReference type="Rhea" id="RHEA-COMP:14527"/>
        <dbReference type="Rhea" id="RHEA-COMP:17342"/>
        <dbReference type="ChEBI" id="CHEBI:33019"/>
        <dbReference type="ChEBI" id="CHEBI:61557"/>
        <dbReference type="ChEBI" id="CHEBI:140395"/>
        <dbReference type="EC" id="2.7.7.48"/>
    </reaction>
</comment>
<comment type="catalytic activity">
    <reaction>
        <text>ATP + H2O = ADP + phosphate + H(+)</text>
        <dbReference type="Rhea" id="RHEA:13065"/>
        <dbReference type="ChEBI" id="CHEBI:15377"/>
        <dbReference type="ChEBI" id="CHEBI:15378"/>
        <dbReference type="ChEBI" id="CHEBI:30616"/>
        <dbReference type="ChEBI" id="CHEBI:43474"/>
        <dbReference type="ChEBI" id="CHEBI:456216"/>
        <dbReference type="EC" id="3.6.4.13"/>
    </reaction>
</comment>
<comment type="similarity">
    <text evidence="5">Belongs to the potexvirus/carlavirus RNA replication protein family.</text>
</comment>
<name>RDRP_PVXCP</name>
<reference key="1">
    <citation type="journal article" date="1990" name="Virus Res.">
        <title>Complete cDNA sequence of a South American isolate of potato virus X.</title>
        <authorList>
            <person name="Orman B.E."/>
            <person name="Celnik R.M."/>
            <person name="Mandel A.M."/>
            <person name="Torres H.N."/>
            <person name="Mentaberry A.N."/>
        </authorList>
    </citation>
    <scope>NUCLEOTIDE SEQUENCE [GENOMIC RNA]</scope>
</reference>
<organism>
    <name type="scientific">Potato virus X (strain CP)</name>
    <name type="common">PVX</name>
    <dbReference type="NCBI Taxonomy" id="12184"/>
    <lineage>
        <taxon>Viruses</taxon>
        <taxon>Riboviria</taxon>
        <taxon>Orthornavirae</taxon>
        <taxon>Kitrinoviricota</taxon>
        <taxon>Alsuviricetes</taxon>
        <taxon>Tymovirales</taxon>
        <taxon>Alphaflexiviridae</taxon>
        <taxon>Potexvirus</taxon>
        <taxon>Potato virus X</taxon>
    </lineage>
</organism>